<name>MURA_PROM0</name>
<feature type="chain" id="PRO_1000023066" description="UDP-N-acetylglucosamine 1-carboxyvinyltransferase">
    <location>
        <begin position="1"/>
        <end position="456"/>
    </location>
</feature>
<feature type="active site" description="Proton donor" evidence="1">
    <location>
        <position position="128"/>
    </location>
</feature>
<feature type="binding site" evidence="1">
    <location>
        <begin position="34"/>
        <end position="35"/>
    </location>
    <ligand>
        <name>phosphoenolpyruvate</name>
        <dbReference type="ChEBI" id="CHEBI:58702"/>
    </ligand>
</feature>
<feature type="binding site" evidence="1">
    <location>
        <position position="104"/>
    </location>
    <ligand>
        <name>UDP-N-acetyl-alpha-D-glucosamine</name>
        <dbReference type="ChEBI" id="CHEBI:57705"/>
    </ligand>
</feature>
<feature type="binding site" evidence="1">
    <location>
        <position position="319"/>
    </location>
    <ligand>
        <name>UDP-N-acetyl-alpha-D-glucosamine</name>
        <dbReference type="ChEBI" id="CHEBI:57705"/>
    </ligand>
</feature>
<feature type="binding site" evidence="1">
    <location>
        <position position="341"/>
    </location>
    <ligand>
        <name>UDP-N-acetyl-alpha-D-glucosamine</name>
        <dbReference type="ChEBI" id="CHEBI:57705"/>
    </ligand>
</feature>
<feature type="modified residue" description="2-(S-cysteinyl)pyruvic acid O-phosphothioketal" evidence="1">
    <location>
        <position position="128"/>
    </location>
</feature>
<gene>
    <name evidence="1" type="primary">murA</name>
    <name type="ordered locus">P9301_14851</name>
</gene>
<keyword id="KW-0131">Cell cycle</keyword>
<keyword id="KW-0132">Cell division</keyword>
<keyword id="KW-0133">Cell shape</keyword>
<keyword id="KW-0961">Cell wall biogenesis/degradation</keyword>
<keyword id="KW-0963">Cytoplasm</keyword>
<keyword id="KW-0573">Peptidoglycan synthesis</keyword>
<keyword id="KW-0670">Pyruvate</keyword>
<keyword id="KW-1185">Reference proteome</keyword>
<keyword id="KW-0808">Transferase</keyword>
<reference key="1">
    <citation type="journal article" date="2007" name="PLoS Genet.">
        <title>Patterns and implications of gene gain and loss in the evolution of Prochlorococcus.</title>
        <authorList>
            <person name="Kettler G.C."/>
            <person name="Martiny A.C."/>
            <person name="Huang K."/>
            <person name="Zucker J."/>
            <person name="Coleman M.L."/>
            <person name="Rodrigue S."/>
            <person name="Chen F."/>
            <person name="Lapidus A."/>
            <person name="Ferriera S."/>
            <person name="Johnson J."/>
            <person name="Steglich C."/>
            <person name="Church G.M."/>
            <person name="Richardson P."/>
            <person name="Chisholm S.W."/>
        </authorList>
    </citation>
    <scope>NUCLEOTIDE SEQUENCE [LARGE SCALE GENOMIC DNA]</scope>
    <source>
        <strain>MIT 9301</strain>
    </source>
</reference>
<sequence length="456" mass="49387">MICGSKNKSYLKSQNLKIFGQGKLNGIVEISGAKNSALVLLAASLLTNERIVLQNVPRLTDIEKMANILRNLGVKIVEKNNRLELDSQNISIKELPYELVNGLRASFFCIGPLLSKFGEAKVPLPGGCNIGSRPIDEHINGLKALGAEILIEEEIVKANIKGDKSRLIGTHIKLKCPSVGATETLIMAASLAEGRTTIENAAREPEIQDLCQMLNKMGAKIYDSGKEKIIIDGVNELCGCSHKVIPDRIEAGTFLIAAAATSSSITISPVIPNHLEAVTNKLQESGSKITIKGNSITINCNKIKGVDIETAPFPGFPTDLQAPFTTLMAIANGESKITETIFENRMNHVHLLNKMGANIKLNKNIAHIKGVKKFKGMDLVGSDLRTSAALIIAGIIAEGTSTISGLEHLDRGYENFESKLKILGIKITREFNKKTLKNKEFKTSSDPADIPRYKAA</sequence>
<dbReference type="EC" id="2.5.1.7" evidence="1"/>
<dbReference type="EMBL" id="CP000576">
    <property type="protein sequence ID" value="ABO18108.1"/>
    <property type="molecule type" value="Genomic_DNA"/>
</dbReference>
<dbReference type="RefSeq" id="WP_011863415.1">
    <property type="nucleotide sequence ID" value="NC_009091.1"/>
</dbReference>
<dbReference type="SMR" id="A3PED3"/>
<dbReference type="STRING" id="167546.P9301_14851"/>
<dbReference type="KEGG" id="pmg:P9301_14851"/>
<dbReference type="eggNOG" id="COG0766">
    <property type="taxonomic scope" value="Bacteria"/>
</dbReference>
<dbReference type="HOGENOM" id="CLU_027387_0_0_3"/>
<dbReference type="OrthoDB" id="9803760at2"/>
<dbReference type="UniPathway" id="UPA00219"/>
<dbReference type="Proteomes" id="UP000001430">
    <property type="component" value="Chromosome"/>
</dbReference>
<dbReference type="GO" id="GO:0005737">
    <property type="term" value="C:cytoplasm"/>
    <property type="evidence" value="ECO:0007669"/>
    <property type="project" value="UniProtKB-SubCell"/>
</dbReference>
<dbReference type="GO" id="GO:0008760">
    <property type="term" value="F:UDP-N-acetylglucosamine 1-carboxyvinyltransferase activity"/>
    <property type="evidence" value="ECO:0007669"/>
    <property type="project" value="UniProtKB-UniRule"/>
</dbReference>
<dbReference type="GO" id="GO:0051301">
    <property type="term" value="P:cell division"/>
    <property type="evidence" value="ECO:0007669"/>
    <property type="project" value="UniProtKB-KW"/>
</dbReference>
<dbReference type="GO" id="GO:0071555">
    <property type="term" value="P:cell wall organization"/>
    <property type="evidence" value="ECO:0007669"/>
    <property type="project" value="UniProtKB-KW"/>
</dbReference>
<dbReference type="GO" id="GO:0009252">
    <property type="term" value="P:peptidoglycan biosynthetic process"/>
    <property type="evidence" value="ECO:0007669"/>
    <property type="project" value="UniProtKB-UniRule"/>
</dbReference>
<dbReference type="GO" id="GO:0008360">
    <property type="term" value="P:regulation of cell shape"/>
    <property type="evidence" value="ECO:0007669"/>
    <property type="project" value="UniProtKB-KW"/>
</dbReference>
<dbReference type="GO" id="GO:0019277">
    <property type="term" value="P:UDP-N-acetylgalactosamine biosynthetic process"/>
    <property type="evidence" value="ECO:0007669"/>
    <property type="project" value="InterPro"/>
</dbReference>
<dbReference type="CDD" id="cd01555">
    <property type="entry name" value="UdpNAET"/>
    <property type="match status" value="1"/>
</dbReference>
<dbReference type="FunFam" id="3.65.10.10:FF:000001">
    <property type="entry name" value="UDP-N-acetylglucosamine 1-carboxyvinyltransferase"/>
    <property type="match status" value="1"/>
</dbReference>
<dbReference type="Gene3D" id="3.65.10.10">
    <property type="entry name" value="Enolpyruvate transferase domain"/>
    <property type="match status" value="2"/>
</dbReference>
<dbReference type="HAMAP" id="MF_00111">
    <property type="entry name" value="MurA"/>
    <property type="match status" value="1"/>
</dbReference>
<dbReference type="InterPro" id="IPR001986">
    <property type="entry name" value="Enolpyruvate_Tfrase_dom"/>
</dbReference>
<dbReference type="InterPro" id="IPR036968">
    <property type="entry name" value="Enolpyruvate_Tfrase_sf"/>
</dbReference>
<dbReference type="InterPro" id="IPR050068">
    <property type="entry name" value="MurA_subfamily"/>
</dbReference>
<dbReference type="InterPro" id="IPR013792">
    <property type="entry name" value="RNA3'P_cycl/enolpyr_Trfase_a/b"/>
</dbReference>
<dbReference type="InterPro" id="IPR005750">
    <property type="entry name" value="UDP_GlcNAc_COvinyl_MurA"/>
</dbReference>
<dbReference type="NCBIfam" id="TIGR01072">
    <property type="entry name" value="murA"/>
    <property type="match status" value="1"/>
</dbReference>
<dbReference type="NCBIfam" id="NF006873">
    <property type="entry name" value="PRK09369.1"/>
    <property type="match status" value="1"/>
</dbReference>
<dbReference type="PANTHER" id="PTHR43783">
    <property type="entry name" value="UDP-N-ACETYLGLUCOSAMINE 1-CARBOXYVINYLTRANSFERASE"/>
    <property type="match status" value="1"/>
</dbReference>
<dbReference type="PANTHER" id="PTHR43783:SF1">
    <property type="entry name" value="UDP-N-ACETYLGLUCOSAMINE 1-CARBOXYVINYLTRANSFERASE"/>
    <property type="match status" value="1"/>
</dbReference>
<dbReference type="Pfam" id="PF00275">
    <property type="entry name" value="EPSP_synthase"/>
    <property type="match status" value="1"/>
</dbReference>
<dbReference type="SUPFAM" id="SSF55205">
    <property type="entry name" value="EPT/RTPC-like"/>
    <property type="match status" value="1"/>
</dbReference>
<comment type="function">
    <text evidence="1">Cell wall formation. Adds enolpyruvyl to UDP-N-acetylglucosamine.</text>
</comment>
<comment type="catalytic activity">
    <reaction evidence="1">
        <text>phosphoenolpyruvate + UDP-N-acetyl-alpha-D-glucosamine = UDP-N-acetyl-3-O-(1-carboxyvinyl)-alpha-D-glucosamine + phosphate</text>
        <dbReference type="Rhea" id="RHEA:18681"/>
        <dbReference type="ChEBI" id="CHEBI:43474"/>
        <dbReference type="ChEBI" id="CHEBI:57705"/>
        <dbReference type="ChEBI" id="CHEBI:58702"/>
        <dbReference type="ChEBI" id="CHEBI:68483"/>
        <dbReference type="EC" id="2.5.1.7"/>
    </reaction>
</comment>
<comment type="pathway">
    <text evidence="1">Cell wall biogenesis; peptidoglycan biosynthesis.</text>
</comment>
<comment type="subcellular location">
    <subcellularLocation>
        <location evidence="1">Cytoplasm</location>
    </subcellularLocation>
</comment>
<comment type="similarity">
    <text evidence="1">Belongs to the EPSP synthase family. MurA subfamily.</text>
</comment>
<proteinExistence type="inferred from homology"/>
<accession>A3PED3</accession>
<organism>
    <name type="scientific">Prochlorococcus marinus (strain MIT 9301)</name>
    <dbReference type="NCBI Taxonomy" id="167546"/>
    <lineage>
        <taxon>Bacteria</taxon>
        <taxon>Bacillati</taxon>
        <taxon>Cyanobacteriota</taxon>
        <taxon>Cyanophyceae</taxon>
        <taxon>Synechococcales</taxon>
        <taxon>Prochlorococcaceae</taxon>
        <taxon>Prochlorococcus</taxon>
    </lineage>
</organism>
<protein>
    <recommendedName>
        <fullName evidence="1">UDP-N-acetylglucosamine 1-carboxyvinyltransferase</fullName>
        <ecNumber evidence="1">2.5.1.7</ecNumber>
    </recommendedName>
    <alternativeName>
        <fullName evidence="1">Enoylpyruvate transferase</fullName>
    </alternativeName>
    <alternativeName>
        <fullName evidence="1">UDP-N-acetylglucosamine enolpyruvyl transferase</fullName>
        <shortName evidence="1">EPT</shortName>
    </alternativeName>
</protein>
<evidence type="ECO:0000255" key="1">
    <source>
        <dbReference type="HAMAP-Rule" id="MF_00111"/>
    </source>
</evidence>